<organism>
    <name type="scientific">Lacticaseibacillus paracasei (strain ATCC 334 / BCRC 17002 / CCUG 31169 / CIP 107868 / KCTC 3260 / NRRL B-441)</name>
    <name type="common">Lactobacillus paracasei</name>
    <dbReference type="NCBI Taxonomy" id="321967"/>
    <lineage>
        <taxon>Bacteria</taxon>
        <taxon>Bacillati</taxon>
        <taxon>Bacillota</taxon>
        <taxon>Bacilli</taxon>
        <taxon>Lactobacillales</taxon>
        <taxon>Lactobacillaceae</taxon>
        <taxon>Lacticaseibacillus</taxon>
    </lineage>
</organism>
<sequence>MPKIHQLSATLSNQIAAGEVIERPASVVKELVENSIDAQATQIDVLISAAGLQEIRVSDNGIGIAPDDVATAFLRHATSKILTTRDLFNVHSLGFRGEALASIAAVADVKLTTATDSGIGTQIHVKGGEVEAQSTAAHRRGTDVEVNDLFFNTPARLKYMKSQQTELGKIVDIVSRLAMANPDIAFTVSHDGNMVVRTAGQGDLRQTLAGIYGLSVARSMVDFKAQDLDFRVSGLTSLPETTRASRNYLSLVVNGRYIKNFQLTKAVIAGYGSKLMVGRYPMGVINIEMDAALVDVNVHPTKAEVRLSKEDQLSHLLSEAIRTRLAKENLIPDALDNLPKRERYDLDQLELTLNKISPKTMPSVQPQQGQQLRENTTTNLADTAAEEPTPAPTSPDLEIGDLDDQPIFNEPQRLAAWDQRYQRLASNVVPTLVADEPEPDISHVESAERFPNLTYLAQVHGTYLLAESGDGLYILDQHAAQERVNYEYYRQAIGEVSNDQQHLLVPIVLDYSAADAISIRDHRDVLESVGLYLEDFGQNSFVVEHHPTWFKAGQEEDTIKEMVDWVLRDGRMTVAAFREKTAIMMSCKRAIKANHHLDDRQARALLQKLPECENPFNCPHGRPVLVHFSNTDLEKMFKRIQDSHESGEMQA</sequence>
<keyword id="KW-0227">DNA damage</keyword>
<keyword id="KW-0234">DNA repair</keyword>
<keyword id="KW-1185">Reference proteome</keyword>
<evidence type="ECO:0000255" key="1">
    <source>
        <dbReference type="HAMAP-Rule" id="MF_00149"/>
    </source>
</evidence>
<evidence type="ECO:0000256" key="2">
    <source>
        <dbReference type="SAM" id="MobiDB-lite"/>
    </source>
</evidence>
<dbReference type="EMBL" id="CP000423">
    <property type="protein sequence ID" value="ABJ70979.1"/>
    <property type="molecule type" value="Genomic_DNA"/>
</dbReference>
<dbReference type="RefSeq" id="WP_003567013.1">
    <property type="nucleotide sequence ID" value="NC_008526.1"/>
</dbReference>
<dbReference type="RefSeq" id="YP_807421.1">
    <property type="nucleotide sequence ID" value="NC_008526.1"/>
</dbReference>
<dbReference type="SMR" id="Q035Z3"/>
<dbReference type="STRING" id="321967.LSEI_2234"/>
<dbReference type="PaxDb" id="321967-LSEI_2234"/>
<dbReference type="KEGG" id="lca:LSEI_2234"/>
<dbReference type="PATRIC" id="fig|321967.11.peg.2196"/>
<dbReference type="HOGENOM" id="CLU_004131_4_1_9"/>
<dbReference type="Proteomes" id="UP000001651">
    <property type="component" value="Chromosome"/>
</dbReference>
<dbReference type="GO" id="GO:0032300">
    <property type="term" value="C:mismatch repair complex"/>
    <property type="evidence" value="ECO:0007669"/>
    <property type="project" value="InterPro"/>
</dbReference>
<dbReference type="GO" id="GO:0005524">
    <property type="term" value="F:ATP binding"/>
    <property type="evidence" value="ECO:0007669"/>
    <property type="project" value="InterPro"/>
</dbReference>
<dbReference type="GO" id="GO:0016887">
    <property type="term" value="F:ATP hydrolysis activity"/>
    <property type="evidence" value="ECO:0007669"/>
    <property type="project" value="InterPro"/>
</dbReference>
<dbReference type="GO" id="GO:0140664">
    <property type="term" value="F:ATP-dependent DNA damage sensor activity"/>
    <property type="evidence" value="ECO:0007669"/>
    <property type="project" value="InterPro"/>
</dbReference>
<dbReference type="GO" id="GO:0030983">
    <property type="term" value="F:mismatched DNA binding"/>
    <property type="evidence" value="ECO:0007669"/>
    <property type="project" value="InterPro"/>
</dbReference>
<dbReference type="GO" id="GO:0006298">
    <property type="term" value="P:mismatch repair"/>
    <property type="evidence" value="ECO:0007669"/>
    <property type="project" value="UniProtKB-UniRule"/>
</dbReference>
<dbReference type="CDD" id="cd16926">
    <property type="entry name" value="HATPase_MutL-MLH-PMS-like"/>
    <property type="match status" value="1"/>
</dbReference>
<dbReference type="CDD" id="cd00782">
    <property type="entry name" value="MutL_Trans"/>
    <property type="match status" value="1"/>
</dbReference>
<dbReference type="FunFam" id="3.30.565.10:FF:000003">
    <property type="entry name" value="DNA mismatch repair endonuclease MutL"/>
    <property type="match status" value="1"/>
</dbReference>
<dbReference type="Gene3D" id="3.30.230.10">
    <property type="match status" value="1"/>
</dbReference>
<dbReference type="Gene3D" id="3.30.565.10">
    <property type="entry name" value="Histidine kinase-like ATPase, C-terminal domain"/>
    <property type="match status" value="1"/>
</dbReference>
<dbReference type="Gene3D" id="3.30.1540.20">
    <property type="entry name" value="MutL, C-terminal domain, dimerisation subdomain"/>
    <property type="match status" value="1"/>
</dbReference>
<dbReference type="Gene3D" id="3.30.1370.100">
    <property type="entry name" value="MutL, C-terminal domain, regulatory subdomain"/>
    <property type="match status" value="1"/>
</dbReference>
<dbReference type="HAMAP" id="MF_00149">
    <property type="entry name" value="DNA_mis_repair"/>
    <property type="match status" value="1"/>
</dbReference>
<dbReference type="InterPro" id="IPR014762">
    <property type="entry name" value="DNA_mismatch_repair_CS"/>
</dbReference>
<dbReference type="InterPro" id="IPR020667">
    <property type="entry name" value="DNA_mismatch_repair_MutL"/>
</dbReference>
<dbReference type="InterPro" id="IPR013507">
    <property type="entry name" value="DNA_mismatch_S5_2-like"/>
</dbReference>
<dbReference type="InterPro" id="IPR036890">
    <property type="entry name" value="HATPase_C_sf"/>
</dbReference>
<dbReference type="InterPro" id="IPR002099">
    <property type="entry name" value="MutL/Mlh/PMS"/>
</dbReference>
<dbReference type="InterPro" id="IPR038973">
    <property type="entry name" value="MutL/Mlh/Pms-like"/>
</dbReference>
<dbReference type="InterPro" id="IPR014790">
    <property type="entry name" value="MutL_C"/>
</dbReference>
<dbReference type="InterPro" id="IPR042120">
    <property type="entry name" value="MutL_C_dimsub"/>
</dbReference>
<dbReference type="InterPro" id="IPR042121">
    <property type="entry name" value="MutL_C_regsub"/>
</dbReference>
<dbReference type="InterPro" id="IPR037198">
    <property type="entry name" value="MutL_C_sf"/>
</dbReference>
<dbReference type="InterPro" id="IPR020568">
    <property type="entry name" value="Ribosomal_Su5_D2-typ_SF"/>
</dbReference>
<dbReference type="InterPro" id="IPR014721">
    <property type="entry name" value="Ribsml_uS5_D2-typ_fold_subgr"/>
</dbReference>
<dbReference type="NCBIfam" id="TIGR00585">
    <property type="entry name" value="mutl"/>
    <property type="match status" value="1"/>
</dbReference>
<dbReference type="NCBIfam" id="NF000950">
    <property type="entry name" value="PRK00095.1-3"/>
    <property type="match status" value="1"/>
</dbReference>
<dbReference type="PANTHER" id="PTHR10073">
    <property type="entry name" value="DNA MISMATCH REPAIR PROTEIN MLH, PMS, MUTL"/>
    <property type="match status" value="1"/>
</dbReference>
<dbReference type="PANTHER" id="PTHR10073:SF12">
    <property type="entry name" value="DNA MISMATCH REPAIR PROTEIN MLH1"/>
    <property type="match status" value="1"/>
</dbReference>
<dbReference type="Pfam" id="PF01119">
    <property type="entry name" value="DNA_mis_repair"/>
    <property type="match status" value="1"/>
</dbReference>
<dbReference type="Pfam" id="PF13589">
    <property type="entry name" value="HATPase_c_3"/>
    <property type="match status" value="1"/>
</dbReference>
<dbReference type="Pfam" id="PF08676">
    <property type="entry name" value="MutL_C"/>
    <property type="match status" value="1"/>
</dbReference>
<dbReference type="SMART" id="SM01340">
    <property type="entry name" value="DNA_mis_repair"/>
    <property type="match status" value="1"/>
</dbReference>
<dbReference type="SMART" id="SM00853">
    <property type="entry name" value="MutL_C"/>
    <property type="match status" value="1"/>
</dbReference>
<dbReference type="SUPFAM" id="SSF55874">
    <property type="entry name" value="ATPase domain of HSP90 chaperone/DNA topoisomerase II/histidine kinase"/>
    <property type="match status" value="1"/>
</dbReference>
<dbReference type="SUPFAM" id="SSF118116">
    <property type="entry name" value="DNA mismatch repair protein MutL"/>
    <property type="match status" value="1"/>
</dbReference>
<dbReference type="SUPFAM" id="SSF54211">
    <property type="entry name" value="Ribosomal protein S5 domain 2-like"/>
    <property type="match status" value="1"/>
</dbReference>
<dbReference type="PROSITE" id="PS00058">
    <property type="entry name" value="DNA_MISMATCH_REPAIR_1"/>
    <property type="match status" value="1"/>
</dbReference>
<accession>Q035Z3</accession>
<comment type="function">
    <text evidence="1">This protein is involved in the repair of mismatches in DNA. It is required for dam-dependent methyl-directed DNA mismatch repair. May act as a 'molecular matchmaker', a protein that promotes the formation of a stable complex between two or more DNA-binding proteins in an ATP-dependent manner without itself being part of a final effector complex.</text>
</comment>
<comment type="similarity">
    <text evidence="1">Belongs to the DNA mismatch repair MutL/HexB family.</text>
</comment>
<feature type="chain" id="PRO_1000010029" description="DNA mismatch repair protein MutL">
    <location>
        <begin position="1"/>
        <end position="651"/>
    </location>
</feature>
<feature type="region of interest" description="Disordered" evidence="2">
    <location>
        <begin position="383"/>
        <end position="405"/>
    </location>
</feature>
<reference key="1">
    <citation type="journal article" date="2006" name="Proc. Natl. Acad. Sci. U.S.A.">
        <title>Comparative genomics of the lactic acid bacteria.</title>
        <authorList>
            <person name="Makarova K.S."/>
            <person name="Slesarev A."/>
            <person name="Wolf Y.I."/>
            <person name="Sorokin A."/>
            <person name="Mirkin B."/>
            <person name="Koonin E.V."/>
            <person name="Pavlov A."/>
            <person name="Pavlova N."/>
            <person name="Karamychev V."/>
            <person name="Polouchine N."/>
            <person name="Shakhova V."/>
            <person name="Grigoriev I."/>
            <person name="Lou Y."/>
            <person name="Rohksar D."/>
            <person name="Lucas S."/>
            <person name="Huang K."/>
            <person name="Goodstein D.M."/>
            <person name="Hawkins T."/>
            <person name="Plengvidhya V."/>
            <person name="Welker D."/>
            <person name="Hughes J."/>
            <person name="Goh Y."/>
            <person name="Benson A."/>
            <person name="Baldwin K."/>
            <person name="Lee J.-H."/>
            <person name="Diaz-Muniz I."/>
            <person name="Dosti B."/>
            <person name="Smeianov V."/>
            <person name="Wechter W."/>
            <person name="Barabote R."/>
            <person name="Lorca G."/>
            <person name="Altermann E."/>
            <person name="Barrangou R."/>
            <person name="Ganesan B."/>
            <person name="Xie Y."/>
            <person name="Rawsthorne H."/>
            <person name="Tamir D."/>
            <person name="Parker C."/>
            <person name="Breidt F."/>
            <person name="Broadbent J.R."/>
            <person name="Hutkins R."/>
            <person name="O'Sullivan D."/>
            <person name="Steele J."/>
            <person name="Unlu G."/>
            <person name="Saier M.H. Jr."/>
            <person name="Klaenhammer T."/>
            <person name="Richardson P."/>
            <person name="Kozyavkin S."/>
            <person name="Weimer B.C."/>
            <person name="Mills D.A."/>
        </authorList>
    </citation>
    <scope>NUCLEOTIDE SEQUENCE [LARGE SCALE GENOMIC DNA]</scope>
    <source>
        <strain>ATCC 334 / BCRC 17002 / CCUG 31169 / CIP 107868 / KCTC 3260 / NRRL B-441</strain>
    </source>
</reference>
<protein>
    <recommendedName>
        <fullName evidence="1">DNA mismatch repair protein MutL</fullName>
    </recommendedName>
</protein>
<proteinExistence type="inferred from homology"/>
<gene>
    <name evidence="1" type="primary">mutL</name>
    <name type="ordered locus">LSEI_2234</name>
</gene>
<name>MUTL_LACP3</name>